<name>RL18_ACIET</name>
<accession>B9MBV3</accession>
<comment type="function">
    <text evidence="1">This is one of the proteins that bind and probably mediate the attachment of the 5S RNA into the large ribosomal subunit, where it forms part of the central protuberance.</text>
</comment>
<comment type="subunit">
    <text evidence="1">Part of the 50S ribosomal subunit; part of the 5S rRNA/L5/L18/L25 subcomplex. Contacts the 5S and 23S rRNAs.</text>
</comment>
<comment type="similarity">
    <text evidence="1">Belongs to the universal ribosomal protein uL18 family.</text>
</comment>
<proteinExistence type="inferred from homology"/>
<gene>
    <name evidence="1" type="primary">rplR</name>
    <name type="ordered locus">Dtpsy_0389</name>
</gene>
<protein>
    <recommendedName>
        <fullName evidence="1">Large ribosomal subunit protein uL18</fullName>
    </recommendedName>
    <alternativeName>
        <fullName evidence="2">50S ribosomal protein L18</fullName>
    </alternativeName>
</protein>
<evidence type="ECO:0000255" key="1">
    <source>
        <dbReference type="HAMAP-Rule" id="MF_01337"/>
    </source>
</evidence>
<evidence type="ECO:0000305" key="2"/>
<feature type="chain" id="PRO_1000166228" description="Large ribosomal subunit protein uL18">
    <location>
        <begin position="1"/>
        <end position="121"/>
    </location>
</feature>
<sequence>MLTKKEQRLRRARQTRIRIAQQGVARLTVNRTNLHIYASVISGDGSKVLASASTAEADVRKSLGGSGKGGNAAAAQIIGKRIAEKAKAAGVEKVAFDRAGFAYHGRVKALADAAREAGLQF</sequence>
<reference key="1">
    <citation type="submission" date="2009-01" db="EMBL/GenBank/DDBJ databases">
        <title>Complete sequence of Diaphorobacter sp. TPSY.</title>
        <authorList>
            <consortium name="US DOE Joint Genome Institute"/>
            <person name="Lucas S."/>
            <person name="Copeland A."/>
            <person name="Lapidus A."/>
            <person name="Glavina del Rio T."/>
            <person name="Tice H."/>
            <person name="Bruce D."/>
            <person name="Goodwin L."/>
            <person name="Pitluck S."/>
            <person name="Chertkov O."/>
            <person name="Brettin T."/>
            <person name="Detter J.C."/>
            <person name="Han C."/>
            <person name="Larimer F."/>
            <person name="Land M."/>
            <person name="Hauser L."/>
            <person name="Kyrpides N."/>
            <person name="Mikhailova N."/>
            <person name="Coates J.D."/>
        </authorList>
    </citation>
    <scope>NUCLEOTIDE SEQUENCE [LARGE SCALE GENOMIC DNA]</scope>
    <source>
        <strain>TPSY</strain>
    </source>
</reference>
<keyword id="KW-1185">Reference proteome</keyword>
<keyword id="KW-0687">Ribonucleoprotein</keyword>
<keyword id="KW-0689">Ribosomal protein</keyword>
<keyword id="KW-0694">RNA-binding</keyword>
<keyword id="KW-0699">rRNA-binding</keyword>
<dbReference type="EMBL" id="CP001392">
    <property type="protein sequence ID" value="ACM31873.1"/>
    <property type="molecule type" value="Genomic_DNA"/>
</dbReference>
<dbReference type="RefSeq" id="WP_011803859.1">
    <property type="nucleotide sequence ID" value="NC_011992.1"/>
</dbReference>
<dbReference type="SMR" id="B9MBV3"/>
<dbReference type="GeneID" id="84683097"/>
<dbReference type="KEGG" id="dia:Dtpsy_0389"/>
<dbReference type="eggNOG" id="COG0256">
    <property type="taxonomic scope" value="Bacteria"/>
</dbReference>
<dbReference type="HOGENOM" id="CLU_098841_0_1_4"/>
<dbReference type="Proteomes" id="UP000000450">
    <property type="component" value="Chromosome"/>
</dbReference>
<dbReference type="GO" id="GO:0022625">
    <property type="term" value="C:cytosolic large ribosomal subunit"/>
    <property type="evidence" value="ECO:0007669"/>
    <property type="project" value="TreeGrafter"/>
</dbReference>
<dbReference type="GO" id="GO:0008097">
    <property type="term" value="F:5S rRNA binding"/>
    <property type="evidence" value="ECO:0007669"/>
    <property type="project" value="TreeGrafter"/>
</dbReference>
<dbReference type="GO" id="GO:0003735">
    <property type="term" value="F:structural constituent of ribosome"/>
    <property type="evidence" value="ECO:0007669"/>
    <property type="project" value="InterPro"/>
</dbReference>
<dbReference type="GO" id="GO:0006412">
    <property type="term" value="P:translation"/>
    <property type="evidence" value="ECO:0007669"/>
    <property type="project" value="UniProtKB-UniRule"/>
</dbReference>
<dbReference type="CDD" id="cd00432">
    <property type="entry name" value="Ribosomal_L18_L5e"/>
    <property type="match status" value="1"/>
</dbReference>
<dbReference type="FunFam" id="3.30.420.100:FF:000001">
    <property type="entry name" value="50S ribosomal protein L18"/>
    <property type="match status" value="1"/>
</dbReference>
<dbReference type="Gene3D" id="3.30.420.100">
    <property type="match status" value="1"/>
</dbReference>
<dbReference type="HAMAP" id="MF_01337_B">
    <property type="entry name" value="Ribosomal_uL18_B"/>
    <property type="match status" value="1"/>
</dbReference>
<dbReference type="InterPro" id="IPR004389">
    <property type="entry name" value="Ribosomal_uL18_bac-type"/>
</dbReference>
<dbReference type="InterPro" id="IPR005484">
    <property type="entry name" value="Ribosomal_uL18_bac/euk"/>
</dbReference>
<dbReference type="NCBIfam" id="TIGR00060">
    <property type="entry name" value="L18_bact"/>
    <property type="match status" value="1"/>
</dbReference>
<dbReference type="PANTHER" id="PTHR12899">
    <property type="entry name" value="39S RIBOSOMAL PROTEIN L18, MITOCHONDRIAL"/>
    <property type="match status" value="1"/>
</dbReference>
<dbReference type="PANTHER" id="PTHR12899:SF3">
    <property type="entry name" value="LARGE RIBOSOMAL SUBUNIT PROTEIN UL18M"/>
    <property type="match status" value="1"/>
</dbReference>
<dbReference type="Pfam" id="PF00861">
    <property type="entry name" value="Ribosomal_L18p"/>
    <property type="match status" value="1"/>
</dbReference>
<dbReference type="SUPFAM" id="SSF53137">
    <property type="entry name" value="Translational machinery components"/>
    <property type="match status" value="1"/>
</dbReference>
<organism>
    <name type="scientific">Acidovorax ebreus (strain TPSY)</name>
    <name type="common">Diaphorobacter sp. (strain TPSY)</name>
    <dbReference type="NCBI Taxonomy" id="535289"/>
    <lineage>
        <taxon>Bacteria</taxon>
        <taxon>Pseudomonadati</taxon>
        <taxon>Pseudomonadota</taxon>
        <taxon>Betaproteobacteria</taxon>
        <taxon>Burkholderiales</taxon>
        <taxon>Comamonadaceae</taxon>
        <taxon>Diaphorobacter</taxon>
    </lineage>
</organism>